<gene>
    <name evidence="1" type="primary">rlmN</name>
    <name type="ordered locus">ETA_10250</name>
</gene>
<comment type="function">
    <text evidence="1">Specifically methylates position 2 of adenine 2503 in 23S rRNA and position 2 of adenine 37 in tRNAs. m2A2503 modification seems to play a crucial role in the proofreading step occurring at the peptidyl transferase center and thus would serve to optimize ribosomal fidelity.</text>
</comment>
<comment type="catalytic activity">
    <reaction evidence="1">
        <text>adenosine(2503) in 23S rRNA + 2 reduced [2Fe-2S]-[ferredoxin] + 2 S-adenosyl-L-methionine = 2-methyladenosine(2503) in 23S rRNA + 5'-deoxyadenosine + L-methionine + 2 oxidized [2Fe-2S]-[ferredoxin] + S-adenosyl-L-homocysteine</text>
        <dbReference type="Rhea" id="RHEA:42916"/>
        <dbReference type="Rhea" id="RHEA-COMP:10000"/>
        <dbReference type="Rhea" id="RHEA-COMP:10001"/>
        <dbReference type="Rhea" id="RHEA-COMP:10152"/>
        <dbReference type="Rhea" id="RHEA-COMP:10282"/>
        <dbReference type="ChEBI" id="CHEBI:17319"/>
        <dbReference type="ChEBI" id="CHEBI:33737"/>
        <dbReference type="ChEBI" id="CHEBI:33738"/>
        <dbReference type="ChEBI" id="CHEBI:57844"/>
        <dbReference type="ChEBI" id="CHEBI:57856"/>
        <dbReference type="ChEBI" id="CHEBI:59789"/>
        <dbReference type="ChEBI" id="CHEBI:74411"/>
        <dbReference type="ChEBI" id="CHEBI:74497"/>
        <dbReference type="EC" id="2.1.1.192"/>
    </reaction>
</comment>
<comment type="catalytic activity">
    <reaction evidence="1">
        <text>adenosine(37) in tRNA + 2 reduced [2Fe-2S]-[ferredoxin] + 2 S-adenosyl-L-methionine = 2-methyladenosine(37) in tRNA + 5'-deoxyadenosine + L-methionine + 2 oxidized [2Fe-2S]-[ferredoxin] + S-adenosyl-L-homocysteine</text>
        <dbReference type="Rhea" id="RHEA:43332"/>
        <dbReference type="Rhea" id="RHEA-COMP:10000"/>
        <dbReference type="Rhea" id="RHEA-COMP:10001"/>
        <dbReference type="Rhea" id="RHEA-COMP:10162"/>
        <dbReference type="Rhea" id="RHEA-COMP:10485"/>
        <dbReference type="ChEBI" id="CHEBI:17319"/>
        <dbReference type="ChEBI" id="CHEBI:33737"/>
        <dbReference type="ChEBI" id="CHEBI:33738"/>
        <dbReference type="ChEBI" id="CHEBI:57844"/>
        <dbReference type="ChEBI" id="CHEBI:57856"/>
        <dbReference type="ChEBI" id="CHEBI:59789"/>
        <dbReference type="ChEBI" id="CHEBI:74411"/>
        <dbReference type="ChEBI" id="CHEBI:74497"/>
        <dbReference type="EC" id="2.1.1.192"/>
    </reaction>
</comment>
<comment type="cofactor">
    <cofactor evidence="1">
        <name>[4Fe-4S] cluster</name>
        <dbReference type="ChEBI" id="CHEBI:49883"/>
    </cofactor>
    <text evidence="1">Binds 1 [4Fe-4S] cluster. The cluster is coordinated with 3 cysteines and an exchangeable S-adenosyl-L-methionine.</text>
</comment>
<comment type="subcellular location">
    <subcellularLocation>
        <location evidence="1">Cytoplasm</location>
    </subcellularLocation>
</comment>
<comment type="miscellaneous">
    <text evidence="1">Reaction proceeds by a ping-pong mechanism involving intermediate methylation of a conserved cysteine residue.</text>
</comment>
<comment type="similarity">
    <text evidence="1">Belongs to the radical SAM superfamily. RlmN family.</text>
</comment>
<proteinExistence type="inferred from homology"/>
<reference key="1">
    <citation type="journal article" date="2008" name="Environ. Microbiol.">
        <title>The genome of Erwinia tasmaniensis strain Et1/99, a non-pathogenic bacterium in the genus Erwinia.</title>
        <authorList>
            <person name="Kube M."/>
            <person name="Migdoll A.M."/>
            <person name="Mueller I."/>
            <person name="Kuhl H."/>
            <person name="Beck A."/>
            <person name="Reinhardt R."/>
            <person name="Geider K."/>
        </authorList>
    </citation>
    <scope>NUCLEOTIDE SEQUENCE [LARGE SCALE GENOMIC DNA]</scope>
    <source>
        <strain>DSM 17950 / CFBP 7177 / CIP 109463 / NCPPB 4357 / Et1/99</strain>
    </source>
</reference>
<keyword id="KW-0004">4Fe-4S</keyword>
<keyword id="KW-0963">Cytoplasm</keyword>
<keyword id="KW-1015">Disulfide bond</keyword>
<keyword id="KW-0408">Iron</keyword>
<keyword id="KW-0411">Iron-sulfur</keyword>
<keyword id="KW-0479">Metal-binding</keyword>
<keyword id="KW-0489">Methyltransferase</keyword>
<keyword id="KW-1185">Reference proteome</keyword>
<keyword id="KW-0698">rRNA processing</keyword>
<keyword id="KW-0949">S-adenosyl-L-methionine</keyword>
<keyword id="KW-0808">Transferase</keyword>
<keyword id="KW-0819">tRNA processing</keyword>
<evidence type="ECO:0000255" key="1">
    <source>
        <dbReference type="HAMAP-Rule" id="MF_01849"/>
    </source>
</evidence>
<evidence type="ECO:0000255" key="2">
    <source>
        <dbReference type="PROSITE-ProRule" id="PRU01266"/>
    </source>
</evidence>
<feature type="chain" id="PRO_1000188577" description="Dual-specificity RNA methyltransferase RlmN">
    <location>
        <begin position="1"/>
        <end position="389"/>
    </location>
</feature>
<feature type="domain" description="Radical SAM core" evidence="2">
    <location>
        <begin position="116"/>
        <end position="355"/>
    </location>
</feature>
<feature type="active site" description="Proton acceptor" evidence="1">
    <location>
        <position position="110"/>
    </location>
</feature>
<feature type="active site" description="S-methylcysteine intermediate" evidence="1">
    <location>
        <position position="360"/>
    </location>
</feature>
<feature type="binding site" evidence="1">
    <location>
        <position position="130"/>
    </location>
    <ligand>
        <name>[4Fe-4S] cluster</name>
        <dbReference type="ChEBI" id="CHEBI:49883"/>
        <note>4Fe-4S-S-AdoMet</note>
    </ligand>
</feature>
<feature type="binding site" evidence="1">
    <location>
        <position position="134"/>
    </location>
    <ligand>
        <name>[4Fe-4S] cluster</name>
        <dbReference type="ChEBI" id="CHEBI:49883"/>
        <note>4Fe-4S-S-AdoMet</note>
    </ligand>
</feature>
<feature type="binding site" evidence="1">
    <location>
        <position position="137"/>
    </location>
    <ligand>
        <name>[4Fe-4S] cluster</name>
        <dbReference type="ChEBI" id="CHEBI:49883"/>
        <note>4Fe-4S-S-AdoMet</note>
    </ligand>
</feature>
<feature type="binding site" evidence="1">
    <location>
        <begin position="184"/>
        <end position="185"/>
    </location>
    <ligand>
        <name>S-adenosyl-L-methionine</name>
        <dbReference type="ChEBI" id="CHEBI:59789"/>
    </ligand>
</feature>
<feature type="binding site" evidence="1">
    <location>
        <position position="216"/>
    </location>
    <ligand>
        <name>S-adenosyl-L-methionine</name>
        <dbReference type="ChEBI" id="CHEBI:59789"/>
    </ligand>
</feature>
<feature type="binding site" evidence="1">
    <location>
        <begin position="238"/>
        <end position="240"/>
    </location>
    <ligand>
        <name>S-adenosyl-L-methionine</name>
        <dbReference type="ChEBI" id="CHEBI:59789"/>
    </ligand>
</feature>
<feature type="binding site" evidence="1">
    <location>
        <position position="317"/>
    </location>
    <ligand>
        <name>S-adenosyl-L-methionine</name>
        <dbReference type="ChEBI" id="CHEBI:59789"/>
    </ligand>
</feature>
<feature type="disulfide bond" description="(transient)" evidence="1">
    <location>
        <begin position="123"/>
        <end position="360"/>
    </location>
</feature>
<sequence length="389" mass="43333">MSELNVTPSSVSPEIVIPKKEKINLLDLNRQQMREFFAGLGEKPFRADQVMKWIYHYCCDDFDEMTDINKVFRNRLKELAEIRAPEVAEEQRSSDGTIKWAIQVGGQQVETVYIPEKDRATLCVSSQVGCALECKFCSTAQQGFNRNLRVSEIIGQVWRAAKIIGATKVIGQRPITNVVMMGMGEPLLNLTNVVPAMEIMLDDFGFGLSKRRVTLSTSGVVPALDKLGDMIDVALAISLHAPNDTIRDEIVPINKKYNIETFLASVSRYIGKSNANQGRVTIEYVMLDHINDSTDNAHELAALLKETPCKINLIPWNPFPGAPYGRSSNSRIDRFSKVLMEYGFTTIVRKTRGDDIDAACGQLAGDVIDRTKRTLKKKMAGEAISVKAL</sequence>
<dbReference type="EC" id="2.1.1.192" evidence="1"/>
<dbReference type="EMBL" id="CU468135">
    <property type="protein sequence ID" value="CAO96071.1"/>
    <property type="molecule type" value="Genomic_DNA"/>
</dbReference>
<dbReference type="RefSeq" id="WP_012440771.1">
    <property type="nucleotide sequence ID" value="NC_010694.1"/>
</dbReference>
<dbReference type="SMR" id="B2VE98"/>
<dbReference type="STRING" id="465817.ETA_10250"/>
<dbReference type="KEGG" id="eta:ETA_10250"/>
<dbReference type="eggNOG" id="COG0820">
    <property type="taxonomic scope" value="Bacteria"/>
</dbReference>
<dbReference type="HOGENOM" id="CLU_029101_0_0_6"/>
<dbReference type="OrthoDB" id="9793973at2"/>
<dbReference type="Proteomes" id="UP000001726">
    <property type="component" value="Chromosome"/>
</dbReference>
<dbReference type="GO" id="GO:0005737">
    <property type="term" value="C:cytoplasm"/>
    <property type="evidence" value="ECO:0007669"/>
    <property type="project" value="UniProtKB-SubCell"/>
</dbReference>
<dbReference type="GO" id="GO:0051539">
    <property type="term" value="F:4 iron, 4 sulfur cluster binding"/>
    <property type="evidence" value="ECO:0007669"/>
    <property type="project" value="UniProtKB-UniRule"/>
</dbReference>
<dbReference type="GO" id="GO:0046872">
    <property type="term" value="F:metal ion binding"/>
    <property type="evidence" value="ECO:0007669"/>
    <property type="project" value="UniProtKB-KW"/>
</dbReference>
<dbReference type="GO" id="GO:0070040">
    <property type="term" value="F:rRNA (adenine(2503)-C2-)-methyltransferase activity"/>
    <property type="evidence" value="ECO:0007669"/>
    <property type="project" value="UniProtKB-UniRule"/>
</dbReference>
<dbReference type="GO" id="GO:0019843">
    <property type="term" value="F:rRNA binding"/>
    <property type="evidence" value="ECO:0007669"/>
    <property type="project" value="UniProtKB-UniRule"/>
</dbReference>
<dbReference type="GO" id="GO:0002935">
    <property type="term" value="F:tRNA (adenine(37)-C2)-methyltransferase activity"/>
    <property type="evidence" value="ECO:0007669"/>
    <property type="project" value="UniProtKB-UniRule"/>
</dbReference>
<dbReference type="GO" id="GO:0000049">
    <property type="term" value="F:tRNA binding"/>
    <property type="evidence" value="ECO:0007669"/>
    <property type="project" value="UniProtKB-UniRule"/>
</dbReference>
<dbReference type="GO" id="GO:0070475">
    <property type="term" value="P:rRNA base methylation"/>
    <property type="evidence" value="ECO:0007669"/>
    <property type="project" value="UniProtKB-UniRule"/>
</dbReference>
<dbReference type="GO" id="GO:0030488">
    <property type="term" value="P:tRNA methylation"/>
    <property type="evidence" value="ECO:0007669"/>
    <property type="project" value="UniProtKB-UniRule"/>
</dbReference>
<dbReference type="CDD" id="cd01335">
    <property type="entry name" value="Radical_SAM"/>
    <property type="match status" value="1"/>
</dbReference>
<dbReference type="FunFam" id="1.10.150.530:FF:000001">
    <property type="entry name" value="Dual-specificity RNA methyltransferase RlmN"/>
    <property type="match status" value="1"/>
</dbReference>
<dbReference type="FunFam" id="3.20.20.70:FF:000008">
    <property type="entry name" value="Dual-specificity RNA methyltransferase RlmN"/>
    <property type="match status" value="1"/>
</dbReference>
<dbReference type="Gene3D" id="1.10.150.530">
    <property type="match status" value="1"/>
</dbReference>
<dbReference type="Gene3D" id="3.20.20.70">
    <property type="entry name" value="Aldolase class I"/>
    <property type="match status" value="1"/>
</dbReference>
<dbReference type="HAMAP" id="MF_01849">
    <property type="entry name" value="RNA_methyltr_RlmN"/>
    <property type="match status" value="1"/>
</dbReference>
<dbReference type="InterPro" id="IPR013785">
    <property type="entry name" value="Aldolase_TIM"/>
</dbReference>
<dbReference type="InterPro" id="IPR040072">
    <property type="entry name" value="Methyltransferase_A"/>
</dbReference>
<dbReference type="InterPro" id="IPR048641">
    <property type="entry name" value="RlmN_N"/>
</dbReference>
<dbReference type="InterPro" id="IPR027492">
    <property type="entry name" value="RNA_MTrfase_RlmN"/>
</dbReference>
<dbReference type="InterPro" id="IPR004383">
    <property type="entry name" value="rRNA_lsu_MTrfase_RlmN/Cfr"/>
</dbReference>
<dbReference type="InterPro" id="IPR007197">
    <property type="entry name" value="rSAM"/>
</dbReference>
<dbReference type="NCBIfam" id="NF008396">
    <property type="entry name" value="PRK11194.1"/>
    <property type="match status" value="1"/>
</dbReference>
<dbReference type="NCBIfam" id="TIGR00048">
    <property type="entry name" value="rRNA_mod_RlmN"/>
    <property type="match status" value="1"/>
</dbReference>
<dbReference type="PANTHER" id="PTHR30544">
    <property type="entry name" value="23S RRNA METHYLTRANSFERASE"/>
    <property type="match status" value="1"/>
</dbReference>
<dbReference type="PANTHER" id="PTHR30544:SF5">
    <property type="entry name" value="RADICAL SAM CORE DOMAIN-CONTAINING PROTEIN"/>
    <property type="match status" value="1"/>
</dbReference>
<dbReference type="Pfam" id="PF04055">
    <property type="entry name" value="Radical_SAM"/>
    <property type="match status" value="1"/>
</dbReference>
<dbReference type="Pfam" id="PF21016">
    <property type="entry name" value="RlmN_N"/>
    <property type="match status" value="1"/>
</dbReference>
<dbReference type="PIRSF" id="PIRSF006004">
    <property type="entry name" value="CHP00048"/>
    <property type="match status" value="1"/>
</dbReference>
<dbReference type="SFLD" id="SFLDF00275">
    <property type="entry name" value="adenosine_C2_methyltransferase"/>
    <property type="match status" value="1"/>
</dbReference>
<dbReference type="SFLD" id="SFLDS00029">
    <property type="entry name" value="Radical_SAM"/>
    <property type="match status" value="1"/>
</dbReference>
<dbReference type="SUPFAM" id="SSF102114">
    <property type="entry name" value="Radical SAM enzymes"/>
    <property type="match status" value="1"/>
</dbReference>
<dbReference type="PROSITE" id="PS51918">
    <property type="entry name" value="RADICAL_SAM"/>
    <property type="match status" value="1"/>
</dbReference>
<accession>B2VE98</accession>
<name>RLMN_ERWT9</name>
<protein>
    <recommendedName>
        <fullName evidence="1">Dual-specificity RNA methyltransferase RlmN</fullName>
        <ecNumber evidence="1">2.1.1.192</ecNumber>
    </recommendedName>
    <alternativeName>
        <fullName evidence="1">23S rRNA (adenine(2503)-C(2))-methyltransferase</fullName>
    </alternativeName>
    <alternativeName>
        <fullName evidence="1">23S rRNA m2A2503 methyltransferase</fullName>
    </alternativeName>
    <alternativeName>
        <fullName evidence="1">Ribosomal RNA large subunit methyltransferase N</fullName>
    </alternativeName>
    <alternativeName>
        <fullName evidence="1">tRNA (adenine(37)-C(2))-methyltransferase</fullName>
    </alternativeName>
    <alternativeName>
        <fullName evidence="1">tRNA m2A37 methyltransferase</fullName>
    </alternativeName>
</protein>
<organism>
    <name type="scientific">Erwinia tasmaniensis (strain DSM 17950 / CFBP 7177 / CIP 109463 / NCPPB 4357 / Et1/99)</name>
    <dbReference type="NCBI Taxonomy" id="465817"/>
    <lineage>
        <taxon>Bacteria</taxon>
        <taxon>Pseudomonadati</taxon>
        <taxon>Pseudomonadota</taxon>
        <taxon>Gammaproteobacteria</taxon>
        <taxon>Enterobacterales</taxon>
        <taxon>Erwiniaceae</taxon>
        <taxon>Erwinia</taxon>
    </lineage>
</organism>